<evidence type="ECO:0000250" key="1">
    <source>
        <dbReference type="UniProtKB" id="Q7JRJ1"/>
    </source>
</evidence>
<evidence type="ECO:0000250" key="2">
    <source>
        <dbReference type="UniProtKB" id="Q96JC9"/>
    </source>
</evidence>
<evidence type="ECO:0000255" key="3"/>
<evidence type="ECO:0000256" key="4">
    <source>
        <dbReference type="SAM" id="MobiDB-lite"/>
    </source>
</evidence>
<evidence type="ECO:0000312" key="5">
    <source>
        <dbReference type="EMBL" id="EDW46746.1"/>
    </source>
</evidence>
<reference evidence="5" key="1">
    <citation type="journal article" date="2007" name="Nature">
        <title>Evolution of genes and genomes on the Drosophila phylogeny.</title>
        <authorList>
            <consortium name="Drosophila 12 genomes consortium"/>
        </authorList>
    </citation>
    <scope>NUCLEOTIDE SEQUENCE [LARGE SCALE GENOMIC DNA]</scope>
    <source>
        <strain evidence="5">Rob3c / Tucson 14021-0248.25</strain>
    </source>
</reference>
<proteinExistence type="inferred from homology"/>
<sequence>MMMTKQKNSLAERLNIGEEARELKLGATFNPKNTSTAFHTIKYDFKPASVDTSRMASVDVGSNNQVTVTVPNSESSGVPHTVYKGNQREYAKECLMIYDKETGAITIEKLNHNIQVKKTRNEVSNKSVQLPGQNMGQGQPHNQGANGAGPAPTSVPGQGSGTAPKMENSTMRISTKTKVSTGSRRNNIIDFKPRNSPMQQNSPSRPVPVHRSPQSAPAWDANNAQQTLPSIPLITDDDDFGLRAALHNSGHANRSGSAAGQPDFVSTSSSTHIGKQRQAPPHGHGKRQQMHQRLSPPMAQQQQQHPSNYGRGYNGGHNHAQQQQQQQRNSPPRQRPSAYGHDNTMDVDSSREHELTSQSVAQAAAALEQQIGGVLSASSSSSESDSSDSDSGSDSDDSTEDDRSTQGQQQDHQQQPHQVYQNHNHTQQQVTQQHHNQLPNLGLGSISPAYGSNHQQQHQQQMLQHQQKQKQQSGIYASNGGFPNDFLQNDLQLSSNSSDDDDD</sequence>
<dbReference type="EMBL" id="CH480816">
    <property type="protein sequence ID" value="EDW46746.1"/>
    <property type="molecule type" value="Genomic_DNA"/>
</dbReference>
<dbReference type="SMR" id="B4HQT6"/>
<dbReference type="STRING" id="7238.B4HQT6"/>
<dbReference type="EnsemblMetazoa" id="FBtr0203785">
    <property type="protein sequence ID" value="FBpp0202277"/>
    <property type="gene ID" value="FBgn0175681"/>
</dbReference>
<dbReference type="EnsemblMetazoa" id="XM_002032697.2">
    <property type="protein sequence ID" value="XP_002032733.1"/>
    <property type="gene ID" value="LOC6607985"/>
</dbReference>
<dbReference type="EnsemblMetazoa" id="XM_032715179.1">
    <property type="protein sequence ID" value="XP_032571070.1"/>
    <property type="gene ID" value="LOC6607985"/>
</dbReference>
<dbReference type="GeneID" id="6607985"/>
<dbReference type="KEGG" id="dse:6607985"/>
<dbReference type="HOGENOM" id="CLU_025755_2_1_1"/>
<dbReference type="OMA" id="SSHMGKQ"/>
<dbReference type="PhylomeDB" id="B4HQT6"/>
<dbReference type="Proteomes" id="UP000001292">
    <property type="component" value="Unassembled WGS sequence"/>
</dbReference>
<dbReference type="GO" id="GO:0005654">
    <property type="term" value="C:nucleoplasm"/>
    <property type="evidence" value="ECO:0000250"/>
    <property type="project" value="UniProtKB"/>
</dbReference>
<dbReference type="GO" id="GO:0032783">
    <property type="term" value="C:super elongation complex"/>
    <property type="evidence" value="ECO:0007669"/>
    <property type="project" value="EnsemblMetazoa"/>
</dbReference>
<dbReference type="GO" id="GO:0003711">
    <property type="term" value="F:transcription elongation factor activity"/>
    <property type="evidence" value="ECO:0007669"/>
    <property type="project" value="TreeGrafter"/>
</dbReference>
<dbReference type="GO" id="GO:0034605">
    <property type="term" value="P:cellular response to heat"/>
    <property type="evidence" value="ECO:0007669"/>
    <property type="project" value="EnsemblMetazoa"/>
</dbReference>
<dbReference type="GO" id="GO:0045893">
    <property type="term" value="P:positive regulation of DNA-templated transcription"/>
    <property type="evidence" value="ECO:0000250"/>
    <property type="project" value="UniProtKB"/>
</dbReference>
<dbReference type="GO" id="GO:0006368">
    <property type="term" value="P:transcription elongation by RNA polymerase II"/>
    <property type="evidence" value="ECO:0007669"/>
    <property type="project" value="InterPro"/>
</dbReference>
<dbReference type="InterPro" id="IPR027093">
    <property type="entry name" value="EAF_fam"/>
</dbReference>
<dbReference type="InterPro" id="IPR019194">
    <property type="entry name" value="Tscrpt_elong_fac_Eaf_N"/>
</dbReference>
<dbReference type="PANTHER" id="PTHR15970">
    <property type="entry name" value="ELL-ASSOCIATED FACTOR EAF"/>
    <property type="match status" value="1"/>
</dbReference>
<dbReference type="PANTHER" id="PTHR15970:SF2">
    <property type="entry name" value="ELL-ASSOCIATED FACTOR EAF"/>
    <property type="match status" value="1"/>
</dbReference>
<dbReference type="Pfam" id="PF09816">
    <property type="entry name" value="EAF"/>
    <property type="match status" value="1"/>
</dbReference>
<protein>
    <recommendedName>
        <fullName evidence="1">Ell-associated factor Eaf</fullName>
    </recommendedName>
</protein>
<comment type="function">
    <text evidence="1">Promotes transcriptional elongation by Su(Tpl)/ELL. Essential for development (By similarity).</text>
</comment>
<comment type="subcellular location">
    <subcellularLocation>
        <location evidence="2">Nucleus</location>
    </subcellularLocation>
</comment>
<comment type="similarity">
    <text evidence="3">Belongs to the EAF family.</text>
</comment>
<keyword id="KW-0010">Activator</keyword>
<keyword id="KW-0217">Developmental protein</keyword>
<keyword id="KW-0539">Nucleus</keyword>
<keyword id="KW-0597">Phosphoprotein</keyword>
<keyword id="KW-1185">Reference proteome</keyword>
<keyword id="KW-0804">Transcription</keyword>
<keyword id="KW-0805">Transcription regulation</keyword>
<feature type="chain" id="PRO_0000386604" description="Ell-associated factor Eaf">
    <location>
        <begin position="1"/>
        <end position="503"/>
    </location>
</feature>
<feature type="region of interest" description="Disordered" evidence="4">
    <location>
        <begin position="119"/>
        <end position="220"/>
    </location>
</feature>
<feature type="region of interest" description="Disordered" evidence="4">
    <location>
        <begin position="250"/>
        <end position="360"/>
    </location>
</feature>
<feature type="region of interest" description="Disordered" evidence="4">
    <location>
        <begin position="372"/>
        <end position="503"/>
    </location>
</feature>
<feature type="compositionally biased region" description="Polar residues" evidence="4">
    <location>
        <begin position="119"/>
        <end position="145"/>
    </location>
</feature>
<feature type="compositionally biased region" description="Polar residues" evidence="4">
    <location>
        <begin position="167"/>
        <end position="186"/>
    </location>
</feature>
<feature type="compositionally biased region" description="Low complexity" evidence="4">
    <location>
        <begin position="202"/>
        <end position="215"/>
    </location>
</feature>
<feature type="compositionally biased region" description="Polar residues" evidence="4">
    <location>
        <begin position="250"/>
        <end position="273"/>
    </location>
</feature>
<feature type="compositionally biased region" description="Polar residues" evidence="4">
    <location>
        <begin position="298"/>
        <end position="307"/>
    </location>
</feature>
<feature type="compositionally biased region" description="Low complexity" evidence="4">
    <location>
        <begin position="308"/>
        <end position="337"/>
    </location>
</feature>
<feature type="compositionally biased region" description="Acidic residues" evidence="4">
    <location>
        <begin position="385"/>
        <end position="400"/>
    </location>
</feature>
<feature type="compositionally biased region" description="Low complexity" evidence="4">
    <location>
        <begin position="406"/>
        <end position="437"/>
    </location>
</feature>
<feature type="compositionally biased region" description="Low complexity" evidence="4">
    <location>
        <begin position="454"/>
        <end position="472"/>
    </location>
</feature>
<feature type="compositionally biased region" description="Low complexity" evidence="4">
    <location>
        <begin position="487"/>
        <end position="497"/>
    </location>
</feature>
<feature type="modified residue" description="Phosphoserine" evidence="1">
    <location>
        <position position="196"/>
    </location>
</feature>
<organism>
    <name type="scientific">Drosophila sechellia</name>
    <name type="common">Fruit fly</name>
    <dbReference type="NCBI Taxonomy" id="7238"/>
    <lineage>
        <taxon>Eukaryota</taxon>
        <taxon>Metazoa</taxon>
        <taxon>Ecdysozoa</taxon>
        <taxon>Arthropoda</taxon>
        <taxon>Hexapoda</taxon>
        <taxon>Insecta</taxon>
        <taxon>Pterygota</taxon>
        <taxon>Neoptera</taxon>
        <taxon>Endopterygota</taxon>
        <taxon>Diptera</taxon>
        <taxon>Brachycera</taxon>
        <taxon>Muscomorpha</taxon>
        <taxon>Ephydroidea</taxon>
        <taxon>Drosophilidae</taxon>
        <taxon>Drosophila</taxon>
        <taxon>Sophophora</taxon>
    </lineage>
</organism>
<gene>
    <name evidence="1" type="primary">Eaf</name>
    <name type="ORF">GM20800</name>
</gene>
<accession>B4HQT6</accession>
<name>EAF_DROSE</name>